<organism>
    <name type="scientific">Streptococcus pneumoniae serotype 4 (strain ATCC BAA-334 / TIGR4)</name>
    <dbReference type="NCBI Taxonomy" id="170187"/>
    <lineage>
        <taxon>Bacteria</taxon>
        <taxon>Bacillati</taxon>
        <taxon>Bacillota</taxon>
        <taxon>Bacilli</taxon>
        <taxon>Lactobacillales</taxon>
        <taxon>Streptococcaceae</taxon>
        <taxon>Streptococcus</taxon>
    </lineage>
</organism>
<sequence length="459" mass="49345">MSNFAIILAAGKGTRMKSDLPKVLHKVAGISMLEHVFRSVGAIQPEKTVTVVGHKAELVEEVLAGQTEFVTQSEQLGTGHAVMMTEPILEGLSGHTLVIAGDTPLITGESLKNLIDFHINHKNVATILTAETDNPFGYGRIVRNDNAEVLRIVEQKDATDFEKQIKEINTGTYVFDNERLFEALKNINTNNAQGEYYITDVIGIFRETGEKVGAYTLKDFDESLGVNDRVALATAESVMRRRINHKHMVNGVSFVNPEATYIDIDVEIASEVQIEANVTLKGQTKIGAETVLTNGTYVVDSTIGAGAVITNSMIEESSVADGVIVGPYAHIRPNSSLGAQVHIGNFVEVKGSSIGENTKAGHLTYIGNCEVGSNVNFGAGTITVNYDGKNKYKTVIGNNVFVGSNSTIIAPVELGDNSLVGAGSTITKDVPADAIAIGRGRQINKDEYATRLPHHPKNQ</sequence>
<dbReference type="EC" id="2.7.7.23" evidence="1"/>
<dbReference type="EC" id="2.3.1.157" evidence="1"/>
<dbReference type="EMBL" id="AE005672">
    <property type="protein sequence ID" value="AAK75107.1"/>
    <property type="molecule type" value="Genomic_DNA"/>
</dbReference>
<dbReference type="PIR" id="B95114">
    <property type="entry name" value="B95114"/>
</dbReference>
<dbReference type="RefSeq" id="WP_000064406.1">
    <property type="nucleotide sequence ID" value="NZ_CP155539.1"/>
</dbReference>
<dbReference type="PDB" id="1G95">
    <property type="method" value="X-ray"/>
    <property type="resolution" value="2.33 A"/>
    <property type="chains" value="A=1-459"/>
</dbReference>
<dbReference type="PDB" id="1G97">
    <property type="method" value="X-ray"/>
    <property type="resolution" value="1.96 A"/>
    <property type="chains" value="A=1-459"/>
</dbReference>
<dbReference type="PDB" id="1HM0">
    <property type="method" value="X-ray"/>
    <property type="resolution" value="2.30 A"/>
    <property type="chains" value="A/B=2-459"/>
</dbReference>
<dbReference type="PDB" id="1HM8">
    <property type="method" value="X-ray"/>
    <property type="resolution" value="2.50 A"/>
    <property type="chains" value="A/B=2-459"/>
</dbReference>
<dbReference type="PDB" id="1HM9">
    <property type="method" value="X-ray"/>
    <property type="resolution" value="1.75 A"/>
    <property type="chains" value="A/B=2-459"/>
</dbReference>
<dbReference type="PDBsum" id="1G95"/>
<dbReference type="PDBsum" id="1G97"/>
<dbReference type="PDBsum" id="1HM0"/>
<dbReference type="PDBsum" id="1HM8"/>
<dbReference type="PDBsum" id="1HM9"/>
<dbReference type="SMR" id="Q97R46"/>
<dbReference type="BindingDB" id="Q97R46"/>
<dbReference type="ChEMBL" id="CHEMBL1949487"/>
<dbReference type="DrugBank" id="DB03397">
    <property type="generic name" value="Uridine-Diphosphate-N-Acetylglucosamine"/>
</dbReference>
<dbReference type="PaxDb" id="170187-SP_0988"/>
<dbReference type="EnsemblBacteria" id="AAK75107">
    <property type="protein sequence ID" value="AAK75107"/>
    <property type="gene ID" value="SP_0988"/>
</dbReference>
<dbReference type="KEGG" id="spn:SP_0988"/>
<dbReference type="eggNOG" id="COG1207">
    <property type="taxonomic scope" value="Bacteria"/>
</dbReference>
<dbReference type="PhylomeDB" id="Q97R46"/>
<dbReference type="BioCyc" id="SPNE170187:G1FZB-1017-MONOMER"/>
<dbReference type="BRENDA" id="2.3.1.157">
    <property type="organism ID" value="1960"/>
</dbReference>
<dbReference type="BRENDA" id="2.7.7.23">
    <property type="organism ID" value="1960"/>
</dbReference>
<dbReference type="UniPathway" id="UPA00113">
    <property type="reaction ID" value="UER00532"/>
</dbReference>
<dbReference type="UniPathway" id="UPA00113">
    <property type="reaction ID" value="UER00533"/>
</dbReference>
<dbReference type="UniPathway" id="UPA00973"/>
<dbReference type="EvolutionaryTrace" id="Q97R46"/>
<dbReference type="PRO" id="PR:Q97R46"/>
<dbReference type="Proteomes" id="UP000000585">
    <property type="component" value="Chromosome"/>
</dbReference>
<dbReference type="GO" id="GO:0005737">
    <property type="term" value="C:cytoplasm"/>
    <property type="evidence" value="ECO:0007669"/>
    <property type="project" value="UniProtKB-SubCell"/>
</dbReference>
<dbReference type="GO" id="GO:0016020">
    <property type="term" value="C:membrane"/>
    <property type="evidence" value="ECO:0007669"/>
    <property type="project" value="GOC"/>
</dbReference>
<dbReference type="GO" id="GO:0019134">
    <property type="term" value="F:glucosamine-1-phosphate N-acetyltransferase activity"/>
    <property type="evidence" value="ECO:0007669"/>
    <property type="project" value="UniProtKB-UniRule"/>
</dbReference>
<dbReference type="GO" id="GO:0000287">
    <property type="term" value="F:magnesium ion binding"/>
    <property type="evidence" value="ECO:0007669"/>
    <property type="project" value="UniProtKB-UniRule"/>
</dbReference>
<dbReference type="GO" id="GO:0003977">
    <property type="term" value="F:UDP-N-acetylglucosamine diphosphorylase activity"/>
    <property type="evidence" value="ECO:0007669"/>
    <property type="project" value="UniProtKB-UniRule"/>
</dbReference>
<dbReference type="GO" id="GO:0000902">
    <property type="term" value="P:cell morphogenesis"/>
    <property type="evidence" value="ECO:0007669"/>
    <property type="project" value="UniProtKB-UniRule"/>
</dbReference>
<dbReference type="GO" id="GO:0071555">
    <property type="term" value="P:cell wall organization"/>
    <property type="evidence" value="ECO:0007669"/>
    <property type="project" value="UniProtKB-KW"/>
</dbReference>
<dbReference type="GO" id="GO:0009245">
    <property type="term" value="P:lipid A biosynthetic process"/>
    <property type="evidence" value="ECO:0007669"/>
    <property type="project" value="UniProtKB-UniRule"/>
</dbReference>
<dbReference type="GO" id="GO:0009252">
    <property type="term" value="P:peptidoglycan biosynthetic process"/>
    <property type="evidence" value="ECO:0007669"/>
    <property type="project" value="UniProtKB-UniRule"/>
</dbReference>
<dbReference type="GO" id="GO:0008360">
    <property type="term" value="P:regulation of cell shape"/>
    <property type="evidence" value="ECO:0007669"/>
    <property type="project" value="UniProtKB-KW"/>
</dbReference>
<dbReference type="GO" id="GO:0006048">
    <property type="term" value="P:UDP-N-acetylglucosamine biosynthetic process"/>
    <property type="evidence" value="ECO:0007669"/>
    <property type="project" value="UniProtKB-UniPathway"/>
</dbReference>
<dbReference type="CDD" id="cd02540">
    <property type="entry name" value="GT2_GlmU_N_bac"/>
    <property type="match status" value="1"/>
</dbReference>
<dbReference type="CDD" id="cd03353">
    <property type="entry name" value="LbH_GlmU_C"/>
    <property type="match status" value="1"/>
</dbReference>
<dbReference type="Gene3D" id="2.160.10.10">
    <property type="entry name" value="Hexapeptide repeat proteins"/>
    <property type="match status" value="1"/>
</dbReference>
<dbReference type="Gene3D" id="3.90.550.10">
    <property type="entry name" value="Spore Coat Polysaccharide Biosynthesis Protein SpsA, Chain A"/>
    <property type="match status" value="1"/>
</dbReference>
<dbReference type="HAMAP" id="MF_01631">
    <property type="entry name" value="GlmU"/>
    <property type="match status" value="1"/>
</dbReference>
<dbReference type="InterPro" id="IPR005882">
    <property type="entry name" value="Bifunctional_GlmU"/>
</dbReference>
<dbReference type="InterPro" id="IPR050065">
    <property type="entry name" value="GlmU-like"/>
</dbReference>
<dbReference type="InterPro" id="IPR038009">
    <property type="entry name" value="GlmU_C_LbH"/>
</dbReference>
<dbReference type="InterPro" id="IPR001451">
    <property type="entry name" value="Hexapep"/>
</dbReference>
<dbReference type="InterPro" id="IPR018357">
    <property type="entry name" value="Hexapep_transf_CS"/>
</dbReference>
<dbReference type="InterPro" id="IPR005835">
    <property type="entry name" value="NTP_transferase_dom"/>
</dbReference>
<dbReference type="InterPro" id="IPR029044">
    <property type="entry name" value="Nucleotide-diphossugar_trans"/>
</dbReference>
<dbReference type="InterPro" id="IPR011004">
    <property type="entry name" value="Trimer_LpxA-like_sf"/>
</dbReference>
<dbReference type="NCBIfam" id="TIGR01173">
    <property type="entry name" value="glmU"/>
    <property type="match status" value="1"/>
</dbReference>
<dbReference type="NCBIfam" id="NF010934">
    <property type="entry name" value="PRK14354.1"/>
    <property type="match status" value="1"/>
</dbReference>
<dbReference type="PANTHER" id="PTHR43584:SF3">
    <property type="entry name" value="BIFUNCTIONAL PROTEIN GLMU"/>
    <property type="match status" value="1"/>
</dbReference>
<dbReference type="PANTHER" id="PTHR43584">
    <property type="entry name" value="NUCLEOTIDYL TRANSFERASE"/>
    <property type="match status" value="1"/>
</dbReference>
<dbReference type="Pfam" id="PF00132">
    <property type="entry name" value="Hexapep"/>
    <property type="match status" value="1"/>
</dbReference>
<dbReference type="Pfam" id="PF00483">
    <property type="entry name" value="NTP_transferase"/>
    <property type="match status" value="1"/>
</dbReference>
<dbReference type="SUPFAM" id="SSF53448">
    <property type="entry name" value="Nucleotide-diphospho-sugar transferases"/>
    <property type="match status" value="1"/>
</dbReference>
<dbReference type="SUPFAM" id="SSF51161">
    <property type="entry name" value="Trimeric LpxA-like enzymes"/>
    <property type="match status" value="1"/>
</dbReference>
<dbReference type="PROSITE" id="PS00101">
    <property type="entry name" value="HEXAPEP_TRANSFERASES"/>
    <property type="match status" value="1"/>
</dbReference>
<feature type="chain" id="PRO_0000233850" description="Bifunctional protein GlmU">
    <location>
        <begin position="1"/>
        <end position="459"/>
    </location>
</feature>
<feature type="region of interest" description="Pyrophosphorylase" evidence="1">
    <location>
        <begin position="1"/>
        <end position="229"/>
    </location>
</feature>
<feature type="region of interest" description="Linker" evidence="1">
    <location>
        <begin position="230"/>
        <end position="250"/>
    </location>
</feature>
<feature type="region of interest" description="N-acetyltransferase" evidence="1">
    <location>
        <begin position="251"/>
        <end position="459"/>
    </location>
</feature>
<feature type="active site" description="Proton acceptor" evidence="1">
    <location>
        <position position="362"/>
    </location>
</feature>
<feature type="binding site" evidence="1 2 3">
    <location>
        <begin position="8"/>
        <end position="11"/>
    </location>
    <ligand>
        <name>UDP-N-acetyl-alpha-D-glucosamine</name>
        <dbReference type="ChEBI" id="CHEBI:57705"/>
    </ligand>
</feature>
<feature type="binding site" evidence="1 2">
    <location>
        <position position="22"/>
    </location>
    <ligand>
        <name>UDP-N-acetyl-alpha-D-glucosamine</name>
        <dbReference type="ChEBI" id="CHEBI:57705"/>
    </ligand>
</feature>
<feature type="binding site" evidence="1 2 3">
    <location>
        <position position="72"/>
    </location>
    <ligand>
        <name>UDP-N-acetyl-alpha-D-glucosamine</name>
        <dbReference type="ChEBI" id="CHEBI:57705"/>
    </ligand>
</feature>
<feature type="binding site" evidence="1 2 3">
    <location>
        <begin position="77"/>
        <end position="78"/>
    </location>
    <ligand>
        <name>UDP-N-acetyl-alpha-D-glucosamine</name>
        <dbReference type="ChEBI" id="CHEBI:57705"/>
    </ligand>
</feature>
<feature type="binding site" evidence="2 3">
    <location>
        <begin position="101"/>
        <end position="102"/>
    </location>
    <ligand>
        <name>UDP-N-acetyl-alpha-D-glucosamine</name>
        <dbReference type="ChEBI" id="CHEBI:57705"/>
    </ligand>
</feature>
<feature type="binding site" evidence="2">
    <location>
        <position position="102"/>
    </location>
    <ligand>
        <name>Ca(2+)</name>
        <dbReference type="ChEBI" id="CHEBI:29108"/>
    </ligand>
</feature>
<feature type="binding site" evidence="3 5">
    <location>
        <position position="102"/>
    </location>
    <ligand>
        <name>Mg(2+)</name>
        <dbReference type="ChEBI" id="CHEBI:18420"/>
    </ligand>
</feature>
<feature type="binding site" evidence="1 2 3">
    <location>
        <position position="139"/>
    </location>
    <ligand>
        <name>UDP-N-acetyl-alpha-D-glucosamine</name>
        <dbReference type="ChEBI" id="CHEBI:57705"/>
    </ligand>
</feature>
<feature type="binding site" evidence="1 2 3">
    <location>
        <position position="154"/>
    </location>
    <ligand>
        <name>UDP-N-acetyl-alpha-D-glucosamine</name>
        <dbReference type="ChEBI" id="CHEBI:57705"/>
    </ligand>
</feature>
<feature type="binding site" evidence="1 2 3">
    <location>
        <position position="169"/>
    </location>
    <ligand>
        <name>UDP-N-acetyl-alpha-D-glucosamine</name>
        <dbReference type="ChEBI" id="CHEBI:57705"/>
    </ligand>
</feature>
<feature type="binding site" evidence="2">
    <location>
        <position position="227"/>
    </location>
    <ligand>
        <name>Ca(2+)</name>
        <dbReference type="ChEBI" id="CHEBI:29108"/>
    </ligand>
</feature>
<feature type="binding site" evidence="3 5">
    <location>
        <position position="227"/>
    </location>
    <ligand>
        <name>Mg(2+)</name>
        <dbReference type="ChEBI" id="CHEBI:18420"/>
    </ligand>
</feature>
<feature type="binding site" evidence="1 2">
    <location>
        <position position="227"/>
    </location>
    <ligand>
        <name>UDP-N-acetyl-alpha-D-glucosamine</name>
        <dbReference type="ChEBI" id="CHEBI:57705"/>
    </ligand>
</feature>
<feature type="binding site" evidence="1">
    <location>
        <position position="332"/>
    </location>
    <ligand>
        <name>UDP-N-acetyl-alpha-D-glucosamine</name>
        <dbReference type="ChEBI" id="CHEBI:57705"/>
    </ligand>
</feature>
<feature type="binding site" evidence="1">
    <location>
        <position position="350"/>
    </location>
    <ligand>
        <name>UDP-N-acetyl-alpha-D-glucosamine</name>
        <dbReference type="ChEBI" id="CHEBI:57705"/>
    </ligand>
</feature>
<feature type="binding site" evidence="1">
    <location>
        <position position="365"/>
    </location>
    <ligand>
        <name>UDP-N-acetyl-alpha-D-glucosamine</name>
        <dbReference type="ChEBI" id="CHEBI:57705"/>
    </ligand>
</feature>
<feature type="binding site" evidence="1">
    <location>
        <position position="376"/>
    </location>
    <ligand>
        <name>UDP-N-acetyl-alpha-D-glucosamine</name>
        <dbReference type="ChEBI" id="CHEBI:57705"/>
    </ligand>
</feature>
<feature type="binding site" evidence="1">
    <location>
        <position position="379"/>
    </location>
    <ligand>
        <name>acetyl-CoA</name>
        <dbReference type="ChEBI" id="CHEBI:57288"/>
    </ligand>
</feature>
<feature type="binding site" evidence="1 2">
    <location>
        <begin position="385"/>
        <end position="386"/>
    </location>
    <ligand>
        <name>acetyl-CoA</name>
        <dbReference type="ChEBI" id="CHEBI:57288"/>
    </ligand>
</feature>
<feature type="binding site" evidence="1">
    <location>
        <position position="404"/>
    </location>
    <ligand>
        <name>acetyl-CoA</name>
        <dbReference type="ChEBI" id="CHEBI:57288"/>
    </ligand>
</feature>
<feature type="binding site" evidence="1">
    <location>
        <position position="422"/>
    </location>
    <ligand>
        <name>acetyl-CoA</name>
        <dbReference type="ChEBI" id="CHEBI:57288"/>
    </ligand>
</feature>
<feature type="binding site" evidence="1">
    <location>
        <position position="439"/>
    </location>
    <ligand>
        <name>acetyl-CoA</name>
        <dbReference type="ChEBI" id="CHEBI:57288"/>
    </ligand>
</feature>
<feature type="strand" evidence="9">
    <location>
        <begin position="3"/>
        <end position="8"/>
    </location>
</feature>
<feature type="helix" evidence="9">
    <location>
        <begin position="14"/>
        <end position="16"/>
    </location>
</feature>
<feature type="helix" evidence="9">
    <location>
        <begin position="22"/>
        <end position="24"/>
    </location>
</feature>
<feature type="strand" evidence="9">
    <location>
        <begin position="25"/>
        <end position="27"/>
    </location>
</feature>
<feature type="helix" evidence="9">
    <location>
        <begin position="32"/>
        <end position="41"/>
    </location>
</feature>
<feature type="strand" evidence="9">
    <location>
        <begin position="46"/>
        <end position="52"/>
    </location>
</feature>
<feature type="helix" evidence="9">
    <location>
        <begin position="56"/>
        <end position="61"/>
    </location>
</feature>
<feature type="strand" evidence="9">
    <location>
        <begin position="62"/>
        <end position="71"/>
    </location>
</feature>
<feature type="helix" evidence="9">
    <location>
        <begin position="78"/>
        <end position="83"/>
    </location>
</feature>
<feature type="helix" evidence="9">
    <location>
        <begin position="86"/>
        <end position="89"/>
    </location>
</feature>
<feature type="strand" evidence="9">
    <location>
        <begin position="94"/>
        <end position="100"/>
    </location>
</feature>
<feature type="helix" evidence="9">
    <location>
        <begin position="108"/>
        <end position="120"/>
    </location>
</feature>
<feature type="strand" evidence="9">
    <location>
        <begin position="124"/>
        <end position="131"/>
    </location>
</feature>
<feature type="strand" evidence="9">
    <location>
        <begin position="140"/>
        <end position="143"/>
    </location>
</feature>
<feature type="strand" evidence="9">
    <location>
        <begin position="149"/>
        <end position="153"/>
    </location>
</feature>
<feature type="turn" evidence="9">
    <location>
        <begin position="155"/>
        <end position="157"/>
    </location>
</feature>
<feature type="helix" evidence="9">
    <location>
        <begin position="162"/>
        <end position="164"/>
    </location>
</feature>
<feature type="strand" evidence="9">
    <location>
        <begin position="167"/>
        <end position="176"/>
    </location>
</feature>
<feature type="helix" evidence="9">
    <location>
        <begin position="177"/>
        <end position="184"/>
    </location>
</feature>
<feature type="strand" evidence="8">
    <location>
        <begin position="192"/>
        <end position="194"/>
    </location>
</feature>
<feature type="helix" evidence="9">
    <location>
        <begin position="200"/>
        <end position="208"/>
    </location>
</feature>
<feature type="strand" evidence="9">
    <location>
        <begin position="212"/>
        <end position="216"/>
    </location>
</feature>
<feature type="helix" evidence="9">
    <location>
        <begin position="220"/>
        <end position="223"/>
    </location>
</feature>
<feature type="helix" evidence="9">
    <location>
        <begin position="229"/>
        <end position="249"/>
    </location>
</feature>
<feature type="strand" evidence="9">
    <location>
        <begin position="253"/>
        <end position="255"/>
    </location>
</feature>
<feature type="helix" evidence="9">
    <location>
        <begin position="257"/>
        <end position="259"/>
    </location>
</feature>
<feature type="strand" evidence="9">
    <location>
        <begin position="279"/>
        <end position="283"/>
    </location>
</feature>
<feature type="strand" evidence="9">
    <location>
        <begin position="297"/>
        <end position="300"/>
    </location>
</feature>
<feature type="strand" evidence="9">
    <location>
        <begin position="313"/>
        <end position="316"/>
    </location>
</feature>
<feature type="strand" evidence="6">
    <location>
        <begin position="333"/>
        <end position="337"/>
    </location>
</feature>
<feature type="strand" evidence="9">
    <location>
        <begin position="342"/>
        <end position="351"/>
    </location>
</feature>
<feature type="strand" evidence="9">
    <location>
        <begin position="359"/>
        <end position="371"/>
    </location>
</feature>
<feature type="strand" evidence="9">
    <location>
        <begin position="382"/>
        <end position="384"/>
    </location>
</feature>
<feature type="strand" evidence="7">
    <location>
        <begin position="386"/>
        <end position="389"/>
    </location>
</feature>
<feature type="strand" evidence="9">
    <location>
        <begin position="394"/>
        <end position="396"/>
    </location>
</feature>
<feature type="strand" evidence="9">
    <location>
        <begin position="407"/>
        <end position="411"/>
    </location>
</feature>
<feature type="helix" evidence="9">
    <location>
        <begin position="448"/>
        <end position="451"/>
    </location>
</feature>
<feature type="helix" evidence="9">
    <location>
        <begin position="456"/>
        <end position="458"/>
    </location>
</feature>
<protein>
    <recommendedName>
        <fullName evidence="1">Bifunctional protein GlmU</fullName>
    </recommendedName>
    <domain>
        <recommendedName>
            <fullName evidence="1">UDP-N-acetylglucosamine pyrophosphorylase</fullName>
            <ecNumber evidence="1">2.7.7.23</ecNumber>
        </recommendedName>
        <alternativeName>
            <fullName evidence="1">N-acetylglucosamine-1-phosphate uridyltransferase</fullName>
        </alternativeName>
    </domain>
    <domain>
        <recommendedName>
            <fullName evidence="1">Glucosamine-1-phosphate N-acetyltransferase</fullName>
            <ecNumber evidence="1">2.3.1.157</ecNumber>
        </recommendedName>
    </domain>
</protein>
<gene>
    <name evidence="1" type="primary">glmU</name>
    <name type="ordered locus">SP_0988</name>
</gene>
<proteinExistence type="evidence at protein level"/>
<comment type="function">
    <text evidence="1">Catalyzes the last two sequential reactions in the de novo biosynthetic pathway for UDP-N-acetylglucosamine (UDP-GlcNAc). The C-terminal domain catalyzes the transfer of acetyl group from acetyl coenzyme A to glucosamine-1-phosphate (GlcN-1-P) to produce N-acetylglucosamine-1-phosphate (GlcNAc-1-P), which is converted into UDP-GlcNAc by the transfer of uridine 5-monophosphate (from uridine 5-triphosphate), a reaction catalyzed by the N-terminal domain.</text>
</comment>
<comment type="catalytic activity">
    <reaction evidence="1">
        <text>alpha-D-glucosamine 1-phosphate + acetyl-CoA = N-acetyl-alpha-D-glucosamine 1-phosphate + CoA + H(+)</text>
        <dbReference type="Rhea" id="RHEA:13725"/>
        <dbReference type="ChEBI" id="CHEBI:15378"/>
        <dbReference type="ChEBI" id="CHEBI:57287"/>
        <dbReference type="ChEBI" id="CHEBI:57288"/>
        <dbReference type="ChEBI" id="CHEBI:57776"/>
        <dbReference type="ChEBI" id="CHEBI:58516"/>
        <dbReference type="EC" id="2.3.1.157"/>
    </reaction>
</comment>
<comment type="catalytic activity">
    <reaction evidence="1">
        <text>N-acetyl-alpha-D-glucosamine 1-phosphate + UTP + H(+) = UDP-N-acetyl-alpha-D-glucosamine + diphosphate</text>
        <dbReference type="Rhea" id="RHEA:13509"/>
        <dbReference type="ChEBI" id="CHEBI:15378"/>
        <dbReference type="ChEBI" id="CHEBI:33019"/>
        <dbReference type="ChEBI" id="CHEBI:46398"/>
        <dbReference type="ChEBI" id="CHEBI:57705"/>
        <dbReference type="ChEBI" id="CHEBI:57776"/>
        <dbReference type="EC" id="2.7.7.23"/>
    </reaction>
</comment>
<comment type="cofactor">
    <cofactor evidence="3">
        <name>Mg(2+)</name>
        <dbReference type="ChEBI" id="CHEBI:18420"/>
    </cofactor>
    <cofactor evidence="2">
        <name>Ca(2+)</name>
        <dbReference type="ChEBI" id="CHEBI:29108"/>
    </cofactor>
    <text evidence="2 3">Binds 1 Mg(2+) ion per subunit (PubMed:11124906). Can also use Ca(2+) ion to a lesser extent (PubMed:11118459).</text>
</comment>
<comment type="pathway">
    <text evidence="1">Nucleotide-sugar biosynthesis; UDP-N-acetyl-alpha-D-glucosamine biosynthesis; N-acetyl-alpha-D-glucosamine 1-phosphate from alpha-D-glucosamine 6-phosphate (route II): step 2/2.</text>
</comment>
<comment type="pathway">
    <text evidence="1">Nucleotide-sugar biosynthesis; UDP-N-acetyl-alpha-D-glucosamine biosynthesis; UDP-N-acetyl-alpha-D-glucosamine from N-acetyl-alpha-D-glucosamine 1-phosphate: step 1/1.</text>
</comment>
<comment type="pathway">
    <text evidence="1">Bacterial outer membrane biogenesis; LPS lipid A biosynthesis.</text>
</comment>
<comment type="subunit">
    <text evidence="1 2 3">Homotrimer.</text>
</comment>
<comment type="subcellular location">
    <subcellularLocation>
        <location evidence="1">Cytoplasm</location>
    </subcellularLocation>
</comment>
<comment type="similarity">
    <text evidence="1 4">In the N-terminal section; belongs to the N-acetylglucosamine-1-phosphate uridyltransferase family.</text>
</comment>
<comment type="similarity">
    <text evidence="1 4">In the C-terminal section; belongs to the transferase hexapeptide repeat family.</text>
</comment>
<keyword id="KW-0002">3D-structure</keyword>
<keyword id="KW-0012">Acyltransferase</keyword>
<keyword id="KW-0133">Cell shape</keyword>
<keyword id="KW-0961">Cell wall biogenesis/degradation</keyword>
<keyword id="KW-0963">Cytoplasm</keyword>
<keyword id="KW-0460">Magnesium</keyword>
<keyword id="KW-0479">Metal-binding</keyword>
<keyword id="KW-0511">Multifunctional enzyme</keyword>
<keyword id="KW-0548">Nucleotidyltransferase</keyword>
<keyword id="KW-0573">Peptidoglycan synthesis</keyword>
<keyword id="KW-1185">Reference proteome</keyword>
<keyword id="KW-0677">Repeat</keyword>
<keyword id="KW-0808">Transferase</keyword>
<name>GLMU_STRPN</name>
<reference key="1">
    <citation type="journal article" date="2001" name="Science">
        <title>Complete genome sequence of a virulent isolate of Streptococcus pneumoniae.</title>
        <authorList>
            <person name="Tettelin H."/>
            <person name="Nelson K.E."/>
            <person name="Paulsen I.T."/>
            <person name="Eisen J.A."/>
            <person name="Read T.D."/>
            <person name="Peterson S.N."/>
            <person name="Heidelberg J.F."/>
            <person name="DeBoy R.T."/>
            <person name="Haft D.H."/>
            <person name="Dodson R.J."/>
            <person name="Durkin A.S."/>
            <person name="Gwinn M.L."/>
            <person name="Kolonay J.F."/>
            <person name="Nelson W.C."/>
            <person name="Peterson J.D."/>
            <person name="Umayam L.A."/>
            <person name="White O."/>
            <person name="Salzberg S.L."/>
            <person name="Lewis M.R."/>
            <person name="Radune D."/>
            <person name="Holtzapple E.K."/>
            <person name="Khouri H.M."/>
            <person name="Wolf A.M."/>
            <person name="Utterback T.R."/>
            <person name="Hansen C.L."/>
            <person name="McDonald L.A."/>
            <person name="Feldblyum T.V."/>
            <person name="Angiuoli S.V."/>
            <person name="Dickinson T."/>
            <person name="Hickey E.K."/>
            <person name="Holt I.E."/>
            <person name="Loftus B.J."/>
            <person name="Yang F."/>
            <person name="Smith H.O."/>
            <person name="Venter J.C."/>
            <person name="Dougherty B.A."/>
            <person name="Morrison D.A."/>
            <person name="Hollingshead S.K."/>
            <person name="Fraser C.M."/>
        </authorList>
    </citation>
    <scope>NUCLEOTIDE SEQUENCE [LARGE SCALE GENOMIC DNA]</scope>
    <source>
        <strain>ATCC BAA-334 / TIGR4</strain>
    </source>
</reference>
<reference key="2">
    <citation type="journal article" date="2001" name="J. Biol. Chem.">
        <title>Crystal structure of Streptococcus pneumoniae N-acetylglucosamine-1-phosphate uridyltransferase bound to acetyl-coenzyme A reveals a novel active site architecture.</title>
        <authorList>
            <person name="Sulzenbacher G."/>
            <person name="Gal L."/>
            <person name="Peneff C."/>
            <person name="Fassy F."/>
            <person name="Bourne Y."/>
        </authorList>
    </citation>
    <scope>X-RAY CRYSTALLOGRAPHY (1.75 ANGSTROMS) OF NATIVE PROTEIN AND IN COMPLEX WITH ACETYL-COA; CALCIUM ION AND UDP-GLCNAC</scope>
    <scope>SUBUNIT</scope>
    <scope>COFACTOR</scope>
    <source>
        <strain>R6 / R800</strain>
    </source>
</reference>
<reference key="3">
    <citation type="journal article" date="2001" name="J. Mol. Biol.">
        <title>Crystal structures of Streptococcus pneumoniae N-acetylglucosamine-1-phosphate uridyltransferase, GlmU, in apo form at 2.33 A resolution and in complex with UDP-N-acetylglucosamine and Mg(2+) at 1.96 A resolution.</title>
        <authorList>
            <person name="Kostrewa D."/>
            <person name="D'Arcy A."/>
            <person name="Takacs B."/>
            <person name="Kamber M."/>
        </authorList>
    </citation>
    <scope>X-RAY CRYSTALLOGRAPHY (1.96 ANGSTROMS) OF NATIVE PROTEIN AND IN COMPLEX WITH BOTH UDP-GLCNAC AND MAGNESIUM</scope>
    <scope>SUBUNIT</scope>
    <scope>COFACTOR</scope>
</reference>
<evidence type="ECO:0000255" key="1">
    <source>
        <dbReference type="HAMAP-Rule" id="MF_01631"/>
    </source>
</evidence>
<evidence type="ECO:0000269" key="2">
    <source>
    </source>
</evidence>
<evidence type="ECO:0000269" key="3">
    <source>
    </source>
</evidence>
<evidence type="ECO:0000305" key="4"/>
<evidence type="ECO:0007744" key="5">
    <source>
        <dbReference type="PDB" id="1G97"/>
    </source>
</evidence>
<evidence type="ECO:0007829" key="6">
    <source>
        <dbReference type="PDB" id="1G95"/>
    </source>
</evidence>
<evidence type="ECO:0007829" key="7">
    <source>
        <dbReference type="PDB" id="1G97"/>
    </source>
</evidence>
<evidence type="ECO:0007829" key="8">
    <source>
        <dbReference type="PDB" id="1HM0"/>
    </source>
</evidence>
<evidence type="ECO:0007829" key="9">
    <source>
        <dbReference type="PDB" id="1HM9"/>
    </source>
</evidence>
<accession>Q97R46</accession>